<keyword id="KW-0028">Amino-acid biosynthesis</keyword>
<keyword id="KW-0057">Aromatic amino acid biosynthesis</keyword>
<keyword id="KW-0170">Cobalt</keyword>
<keyword id="KW-0963">Cytoplasm</keyword>
<keyword id="KW-0456">Lyase</keyword>
<keyword id="KW-0479">Metal-binding</keyword>
<keyword id="KW-0520">NAD</keyword>
<keyword id="KW-0547">Nucleotide-binding</keyword>
<keyword id="KW-1185">Reference proteome</keyword>
<keyword id="KW-0862">Zinc</keyword>
<accession>Q4FQI3</accession>
<feature type="chain" id="PRO_0000231118" description="3-dehydroquinate synthase">
    <location>
        <begin position="1"/>
        <end position="388"/>
    </location>
</feature>
<feature type="binding site" evidence="1">
    <location>
        <begin position="85"/>
        <end position="90"/>
    </location>
    <ligand>
        <name>NAD(+)</name>
        <dbReference type="ChEBI" id="CHEBI:57540"/>
    </ligand>
</feature>
<feature type="binding site" evidence="1">
    <location>
        <begin position="119"/>
        <end position="123"/>
    </location>
    <ligand>
        <name>NAD(+)</name>
        <dbReference type="ChEBI" id="CHEBI:57540"/>
    </ligand>
</feature>
<feature type="binding site" evidence="1">
    <location>
        <begin position="143"/>
        <end position="144"/>
    </location>
    <ligand>
        <name>NAD(+)</name>
        <dbReference type="ChEBI" id="CHEBI:57540"/>
    </ligand>
</feature>
<feature type="binding site" evidence="1">
    <location>
        <position position="156"/>
    </location>
    <ligand>
        <name>NAD(+)</name>
        <dbReference type="ChEBI" id="CHEBI:57540"/>
    </ligand>
</feature>
<feature type="binding site" evidence="1">
    <location>
        <position position="165"/>
    </location>
    <ligand>
        <name>NAD(+)</name>
        <dbReference type="ChEBI" id="CHEBI:57540"/>
    </ligand>
</feature>
<feature type="binding site" evidence="1">
    <location>
        <begin position="183"/>
        <end position="186"/>
    </location>
    <ligand>
        <name>NAD(+)</name>
        <dbReference type="ChEBI" id="CHEBI:57540"/>
    </ligand>
</feature>
<feature type="binding site" evidence="1">
    <location>
        <position position="198"/>
    </location>
    <ligand>
        <name>Zn(2+)</name>
        <dbReference type="ChEBI" id="CHEBI:29105"/>
    </ligand>
</feature>
<feature type="binding site" evidence="1">
    <location>
        <position position="261"/>
    </location>
    <ligand>
        <name>Zn(2+)</name>
        <dbReference type="ChEBI" id="CHEBI:29105"/>
    </ligand>
</feature>
<feature type="binding site" evidence="1">
    <location>
        <position position="278"/>
    </location>
    <ligand>
        <name>Zn(2+)</name>
        <dbReference type="ChEBI" id="CHEBI:29105"/>
    </ligand>
</feature>
<name>AROB_PSYA2</name>
<organism>
    <name type="scientific">Psychrobacter arcticus (strain DSM 17307 / VKM B-2377 / 273-4)</name>
    <dbReference type="NCBI Taxonomy" id="259536"/>
    <lineage>
        <taxon>Bacteria</taxon>
        <taxon>Pseudomonadati</taxon>
        <taxon>Pseudomonadota</taxon>
        <taxon>Gammaproteobacteria</taxon>
        <taxon>Moraxellales</taxon>
        <taxon>Moraxellaceae</taxon>
        <taxon>Psychrobacter</taxon>
    </lineage>
</organism>
<protein>
    <recommendedName>
        <fullName evidence="1">3-dehydroquinate synthase</fullName>
        <shortName evidence="1">DHQS</shortName>
        <ecNumber evidence="1">4.2.3.4</ecNumber>
    </recommendedName>
</protein>
<sequence>MATPLFHADLTVHTQSHDYPIVITENTATENAIAEESSMASQVAPYIAGQQVLIVTNETIAPLYLKALKQPLEVQFTVQVCVLPDGEQYKNQSSINQIYDVLMAAHFNRDVTLIALGGGVIGDMTGFSAASFMRGVNFIQIPTTLLSQVDSSVGGKTGINHPQGKNMIGAFWQPQMVLADMSTLKTLPARELSAGLAEVIKYALIMDADFLTWLEHNLPAMMALNLVILGEAVKRCCEYKADIVAQDERESGVRALLNFGHTFGHVIETHEGYGNWLHGEAVAAGMVQAAELSQKIGWLTSDEVARVKRVLLLANLPITPPPIAVQTALNLMGHDKKVKHGQIRLILLKSLGEAVLTNDFDPDLLTDVLSQHAIHAKDDAQATTATVL</sequence>
<dbReference type="EC" id="4.2.3.4" evidence="1"/>
<dbReference type="EMBL" id="CP000082">
    <property type="protein sequence ID" value="AAZ19725.1"/>
    <property type="molecule type" value="Genomic_DNA"/>
</dbReference>
<dbReference type="RefSeq" id="WP_011281135.1">
    <property type="nucleotide sequence ID" value="NC_007204.1"/>
</dbReference>
<dbReference type="SMR" id="Q4FQI3"/>
<dbReference type="STRING" id="259536.Psyc_1877"/>
<dbReference type="KEGG" id="par:Psyc_1877"/>
<dbReference type="eggNOG" id="COG0337">
    <property type="taxonomic scope" value="Bacteria"/>
</dbReference>
<dbReference type="HOGENOM" id="CLU_001201_0_2_6"/>
<dbReference type="OrthoDB" id="9806583at2"/>
<dbReference type="UniPathway" id="UPA00053">
    <property type="reaction ID" value="UER00085"/>
</dbReference>
<dbReference type="Proteomes" id="UP000000546">
    <property type="component" value="Chromosome"/>
</dbReference>
<dbReference type="GO" id="GO:0005737">
    <property type="term" value="C:cytoplasm"/>
    <property type="evidence" value="ECO:0007669"/>
    <property type="project" value="UniProtKB-SubCell"/>
</dbReference>
<dbReference type="GO" id="GO:0003856">
    <property type="term" value="F:3-dehydroquinate synthase activity"/>
    <property type="evidence" value="ECO:0007669"/>
    <property type="project" value="UniProtKB-UniRule"/>
</dbReference>
<dbReference type="GO" id="GO:0046872">
    <property type="term" value="F:metal ion binding"/>
    <property type="evidence" value="ECO:0007669"/>
    <property type="project" value="UniProtKB-KW"/>
</dbReference>
<dbReference type="GO" id="GO:0000166">
    <property type="term" value="F:nucleotide binding"/>
    <property type="evidence" value="ECO:0007669"/>
    <property type="project" value="UniProtKB-KW"/>
</dbReference>
<dbReference type="GO" id="GO:0008652">
    <property type="term" value="P:amino acid biosynthetic process"/>
    <property type="evidence" value="ECO:0007669"/>
    <property type="project" value="UniProtKB-KW"/>
</dbReference>
<dbReference type="GO" id="GO:0009073">
    <property type="term" value="P:aromatic amino acid family biosynthetic process"/>
    <property type="evidence" value="ECO:0007669"/>
    <property type="project" value="UniProtKB-KW"/>
</dbReference>
<dbReference type="GO" id="GO:0009423">
    <property type="term" value="P:chorismate biosynthetic process"/>
    <property type="evidence" value="ECO:0007669"/>
    <property type="project" value="UniProtKB-UniRule"/>
</dbReference>
<dbReference type="CDD" id="cd08195">
    <property type="entry name" value="DHQS"/>
    <property type="match status" value="1"/>
</dbReference>
<dbReference type="FunFam" id="3.40.50.1970:FF:000001">
    <property type="entry name" value="3-dehydroquinate synthase"/>
    <property type="match status" value="1"/>
</dbReference>
<dbReference type="Gene3D" id="3.40.50.1970">
    <property type="match status" value="1"/>
</dbReference>
<dbReference type="Gene3D" id="1.20.1090.10">
    <property type="entry name" value="Dehydroquinate synthase-like - alpha domain"/>
    <property type="match status" value="1"/>
</dbReference>
<dbReference type="HAMAP" id="MF_00110">
    <property type="entry name" value="DHQ_synthase"/>
    <property type="match status" value="1"/>
</dbReference>
<dbReference type="InterPro" id="IPR050071">
    <property type="entry name" value="Dehydroquinate_synthase"/>
</dbReference>
<dbReference type="InterPro" id="IPR016037">
    <property type="entry name" value="DHQ_synth_AroB"/>
</dbReference>
<dbReference type="InterPro" id="IPR030963">
    <property type="entry name" value="DHQ_synth_fam"/>
</dbReference>
<dbReference type="InterPro" id="IPR030960">
    <property type="entry name" value="DHQS/DOIS_N"/>
</dbReference>
<dbReference type="InterPro" id="IPR056179">
    <property type="entry name" value="DHQS_C"/>
</dbReference>
<dbReference type="NCBIfam" id="TIGR01357">
    <property type="entry name" value="aroB"/>
    <property type="match status" value="1"/>
</dbReference>
<dbReference type="PANTHER" id="PTHR43622">
    <property type="entry name" value="3-DEHYDROQUINATE SYNTHASE"/>
    <property type="match status" value="1"/>
</dbReference>
<dbReference type="PANTHER" id="PTHR43622:SF7">
    <property type="entry name" value="3-DEHYDROQUINATE SYNTHASE, CHLOROPLASTIC"/>
    <property type="match status" value="1"/>
</dbReference>
<dbReference type="Pfam" id="PF01761">
    <property type="entry name" value="DHQ_synthase"/>
    <property type="match status" value="1"/>
</dbReference>
<dbReference type="Pfam" id="PF24621">
    <property type="entry name" value="DHQS_C"/>
    <property type="match status" value="1"/>
</dbReference>
<dbReference type="PIRSF" id="PIRSF001455">
    <property type="entry name" value="DHQ_synth"/>
    <property type="match status" value="1"/>
</dbReference>
<dbReference type="SUPFAM" id="SSF56796">
    <property type="entry name" value="Dehydroquinate synthase-like"/>
    <property type="match status" value="1"/>
</dbReference>
<proteinExistence type="inferred from homology"/>
<reference key="1">
    <citation type="journal article" date="2010" name="Appl. Environ. Microbiol.">
        <title>The genome sequence of Psychrobacter arcticus 273-4, a psychroactive Siberian permafrost bacterium, reveals mechanisms for adaptation to low-temperature growth.</title>
        <authorList>
            <person name="Ayala-del-Rio H.L."/>
            <person name="Chain P.S."/>
            <person name="Grzymski J.J."/>
            <person name="Ponder M.A."/>
            <person name="Ivanova N."/>
            <person name="Bergholz P.W."/>
            <person name="Di Bartolo G."/>
            <person name="Hauser L."/>
            <person name="Land M."/>
            <person name="Bakermans C."/>
            <person name="Rodrigues D."/>
            <person name="Klappenbach J."/>
            <person name="Zarka D."/>
            <person name="Larimer F."/>
            <person name="Richardson P."/>
            <person name="Murray A."/>
            <person name="Thomashow M."/>
            <person name="Tiedje J.M."/>
        </authorList>
    </citation>
    <scope>NUCLEOTIDE SEQUENCE [LARGE SCALE GENOMIC DNA]</scope>
    <source>
        <strain>DSM 17307 / VKM B-2377 / 273-4</strain>
    </source>
</reference>
<comment type="function">
    <text evidence="1">Catalyzes the conversion of 3-deoxy-D-arabino-heptulosonate 7-phosphate (DAHP) to dehydroquinate (DHQ).</text>
</comment>
<comment type="catalytic activity">
    <reaction evidence="1">
        <text>7-phospho-2-dehydro-3-deoxy-D-arabino-heptonate = 3-dehydroquinate + phosphate</text>
        <dbReference type="Rhea" id="RHEA:21968"/>
        <dbReference type="ChEBI" id="CHEBI:32364"/>
        <dbReference type="ChEBI" id="CHEBI:43474"/>
        <dbReference type="ChEBI" id="CHEBI:58394"/>
        <dbReference type="EC" id="4.2.3.4"/>
    </reaction>
</comment>
<comment type="cofactor">
    <cofactor evidence="1">
        <name>Co(2+)</name>
        <dbReference type="ChEBI" id="CHEBI:48828"/>
    </cofactor>
    <cofactor evidence="1">
        <name>Zn(2+)</name>
        <dbReference type="ChEBI" id="CHEBI:29105"/>
    </cofactor>
    <text evidence="1">Binds 1 divalent metal cation per subunit. Can use either Co(2+) or Zn(2+).</text>
</comment>
<comment type="cofactor">
    <cofactor evidence="1">
        <name>NAD(+)</name>
        <dbReference type="ChEBI" id="CHEBI:57540"/>
    </cofactor>
</comment>
<comment type="pathway">
    <text evidence="1">Metabolic intermediate biosynthesis; chorismate biosynthesis; chorismate from D-erythrose 4-phosphate and phosphoenolpyruvate: step 2/7.</text>
</comment>
<comment type="subcellular location">
    <subcellularLocation>
        <location evidence="1">Cytoplasm</location>
    </subcellularLocation>
</comment>
<comment type="similarity">
    <text evidence="1">Belongs to the sugar phosphate cyclases superfamily. Dehydroquinate synthase family.</text>
</comment>
<evidence type="ECO:0000255" key="1">
    <source>
        <dbReference type="HAMAP-Rule" id="MF_00110"/>
    </source>
</evidence>
<gene>
    <name evidence="1" type="primary">aroB</name>
    <name type="ordered locus">Psyc_1877</name>
</gene>